<proteinExistence type="inferred from homology"/>
<dbReference type="EMBL" id="BX842646">
    <property type="protein sequence ID" value="CAE77685.1"/>
    <property type="molecule type" value="Genomic_DNA"/>
</dbReference>
<dbReference type="SMR" id="Q6MRS1"/>
<dbReference type="STRING" id="264462.Bd0001"/>
<dbReference type="KEGG" id="bba:Bd0001"/>
<dbReference type="eggNOG" id="COG0593">
    <property type="taxonomic scope" value="Bacteria"/>
</dbReference>
<dbReference type="HOGENOM" id="CLU_026910_3_2_7"/>
<dbReference type="Proteomes" id="UP000008080">
    <property type="component" value="Chromosome"/>
</dbReference>
<dbReference type="GO" id="GO:0005737">
    <property type="term" value="C:cytoplasm"/>
    <property type="evidence" value="ECO:0007669"/>
    <property type="project" value="UniProtKB-SubCell"/>
</dbReference>
<dbReference type="GO" id="GO:0005886">
    <property type="term" value="C:plasma membrane"/>
    <property type="evidence" value="ECO:0007669"/>
    <property type="project" value="TreeGrafter"/>
</dbReference>
<dbReference type="GO" id="GO:0005524">
    <property type="term" value="F:ATP binding"/>
    <property type="evidence" value="ECO:0007669"/>
    <property type="project" value="UniProtKB-UniRule"/>
</dbReference>
<dbReference type="GO" id="GO:0016887">
    <property type="term" value="F:ATP hydrolysis activity"/>
    <property type="evidence" value="ECO:0007669"/>
    <property type="project" value="InterPro"/>
</dbReference>
<dbReference type="GO" id="GO:0003688">
    <property type="term" value="F:DNA replication origin binding"/>
    <property type="evidence" value="ECO:0007669"/>
    <property type="project" value="UniProtKB-UniRule"/>
</dbReference>
<dbReference type="GO" id="GO:0008289">
    <property type="term" value="F:lipid binding"/>
    <property type="evidence" value="ECO:0007669"/>
    <property type="project" value="UniProtKB-KW"/>
</dbReference>
<dbReference type="GO" id="GO:0006270">
    <property type="term" value="P:DNA replication initiation"/>
    <property type="evidence" value="ECO:0007669"/>
    <property type="project" value="UniProtKB-UniRule"/>
</dbReference>
<dbReference type="GO" id="GO:0006275">
    <property type="term" value="P:regulation of DNA replication"/>
    <property type="evidence" value="ECO:0007669"/>
    <property type="project" value="UniProtKB-UniRule"/>
</dbReference>
<dbReference type="CDD" id="cd00009">
    <property type="entry name" value="AAA"/>
    <property type="match status" value="1"/>
</dbReference>
<dbReference type="CDD" id="cd06571">
    <property type="entry name" value="Bac_DnaA_C"/>
    <property type="match status" value="1"/>
</dbReference>
<dbReference type="Gene3D" id="1.10.1750.10">
    <property type="match status" value="1"/>
</dbReference>
<dbReference type="Gene3D" id="1.10.8.60">
    <property type="match status" value="1"/>
</dbReference>
<dbReference type="Gene3D" id="3.30.300.180">
    <property type="match status" value="1"/>
</dbReference>
<dbReference type="Gene3D" id="3.40.50.300">
    <property type="entry name" value="P-loop containing nucleotide triphosphate hydrolases"/>
    <property type="match status" value="1"/>
</dbReference>
<dbReference type="HAMAP" id="MF_00377">
    <property type="entry name" value="DnaA_bact"/>
    <property type="match status" value="1"/>
</dbReference>
<dbReference type="InterPro" id="IPR003593">
    <property type="entry name" value="AAA+_ATPase"/>
</dbReference>
<dbReference type="InterPro" id="IPR001957">
    <property type="entry name" value="Chromosome_initiator_DnaA"/>
</dbReference>
<dbReference type="InterPro" id="IPR020591">
    <property type="entry name" value="Chromosome_initiator_DnaA-like"/>
</dbReference>
<dbReference type="InterPro" id="IPR018312">
    <property type="entry name" value="Chromosome_initiator_DnaA_CS"/>
</dbReference>
<dbReference type="InterPro" id="IPR013159">
    <property type="entry name" value="DnaA_C"/>
</dbReference>
<dbReference type="InterPro" id="IPR013317">
    <property type="entry name" value="DnaA_dom"/>
</dbReference>
<dbReference type="InterPro" id="IPR038454">
    <property type="entry name" value="DnaA_N_sf"/>
</dbReference>
<dbReference type="InterPro" id="IPR027417">
    <property type="entry name" value="P-loop_NTPase"/>
</dbReference>
<dbReference type="InterPro" id="IPR010921">
    <property type="entry name" value="Trp_repressor/repl_initiator"/>
</dbReference>
<dbReference type="NCBIfam" id="TIGR00362">
    <property type="entry name" value="DnaA"/>
    <property type="match status" value="1"/>
</dbReference>
<dbReference type="PANTHER" id="PTHR30050">
    <property type="entry name" value="CHROMOSOMAL REPLICATION INITIATOR PROTEIN DNAA"/>
    <property type="match status" value="1"/>
</dbReference>
<dbReference type="PANTHER" id="PTHR30050:SF2">
    <property type="entry name" value="CHROMOSOMAL REPLICATION INITIATOR PROTEIN DNAA"/>
    <property type="match status" value="1"/>
</dbReference>
<dbReference type="Pfam" id="PF00308">
    <property type="entry name" value="Bac_DnaA"/>
    <property type="match status" value="1"/>
</dbReference>
<dbReference type="Pfam" id="PF08299">
    <property type="entry name" value="Bac_DnaA_C"/>
    <property type="match status" value="1"/>
</dbReference>
<dbReference type="PRINTS" id="PR00051">
    <property type="entry name" value="DNAA"/>
</dbReference>
<dbReference type="SMART" id="SM00382">
    <property type="entry name" value="AAA"/>
    <property type="match status" value="1"/>
</dbReference>
<dbReference type="SMART" id="SM00760">
    <property type="entry name" value="Bac_DnaA_C"/>
    <property type="match status" value="1"/>
</dbReference>
<dbReference type="SUPFAM" id="SSF52540">
    <property type="entry name" value="P-loop containing nucleoside triphosphate hydrolases"/>
    <property type="match status" value="1"/>
</dbReference>
<dbReference type="SUPFAM" id="SSF48295">
    <property type="entry name" value="TrpR-like"/>
    <property type="match status" value="1"/>
</dbReference>
<dbReference type="PROSITE" id="PS01008">
    <property type="entry name" value="DNAA"/>
    <property type="match status" value="1"/>
</dbReference>
<reference key="1">
    <citation type="journal article" date="2004" name="Science">
        <title>A predator unmasked: life cycle of Bdellovibrio bacteriovorus from a genomic perspective.</title>
        <authorList>
            <person name="Rendulic S."/>
            <person name="Jagtap P."/>
            <person name="Rosinus A."/>
            <person name="Eppinger M."/>
            <person name="Baar C."/>
            <person name="Lanz C."/>
            <person name="Keller H."/>
            <person name="Lambert C."/>
            <person name="Evans K.J."/>
            <person name="Goesmann A."/>
            <person name="Meyer F."/>
            <person name="Sockett R.E."/>
            <person name="Schuster S.C."/>
        </authorList>
    </citation>
    <scope>NUCLEOTIDE SEQUENCE [LARGE SCALE GENOMIC DNA]</scope>
    <source>
        <strain>ATCC 15356 / DSM 50701 / NCIMB 9529 / HD100</strain>
    </source>
</reference>
<gene>
    <name evidence="1" type="primary">dnaA</name>
    <name type="ordered locus">Bd0001</name>
</gene>
<accession>Q6MRS1</accession>
<keyword id="KW-0067">ATP-binding</keyword>
<keyword id="KW-0963">Cytoplasm</keyword>
<keyword id="KW-0235">DNA replication</keyword>
<keyword id="KW-0238">DNA-binding</keyword>
<keyword id="KW-0446">Lipid-binding</keyword>
<keyword id="KW-0547">Nucleotide-binding</keyword>
<keyword id="KW-1185">Reference proteome</keyword>
<comment type="function">
    <text evidence="1">Plays an essential role in the initiation and regulation of chromosomal replication. ATP-DnaA binds to the origin of replication (oriC) to initiate formation of the DNA replication initiation complex once per cell cycle. Binds the DnaA box (a 9 base pair repeat at the origin) and separates the double-stranded (ds)DNA. Forms a right-handed helical filament on oriC DNA; dsDNA binds to the exterior of the filament while single-stranded (ss)DNA is stabiized in the filament's interior. The ATP-DnaA-oriC complex binds and stabilizes one strand of the AT-rich DNA unwinding element (DUE), permitting loading of DNA polymerase. After initiation quickly degrades to an ADP-DnaA complex that is not apt for DNA replication. Binds acidic phospholipids.</text>
</comment>
<comment type="subunit">
    <text evidence="1">Oligomerizes as a right-handed, spiral filament on DNA at oriC.</text>
</comment>
<comment type="subcellular location">
    <subcellularLocation>
        <location evidence="1">Cytoplasm</location>
    </subcellularLocation>
</comment>
<comment type="domain">
    <text evidence="1">Domain I is involved in oligomerization and binding regulators, domain II is flexibile and of varying length in different bacteria, domain III forms the AAA+ region, while domain IV binds dsDNA.</text>
</comment>
<comment type="similarity">
    <text evidence="1">Belongs to the DnaA family.</text>
</comment>
<evidence type="ECO:0000255" key="1">
    <source>
        <dbReference type="HAMAP-Rule" id="MF_00377"/>
    </source>
</evidence>
<name>DNAA_BDEBA</name>
<protein>
    <recommendedName>
        <fullName evidence="1">Chromosomal replication initiator protein DnaA</fullName>
    </recommendedName>
</protein>
<feature type="chain" id="PRO_0000114137" description="Chromosomal replication initiator protein DnaA">
    <location>
        <begin position="1"/>
        <end position="471"/>
    </location>
</feature>
<feature type="region of interest" description="Domain I, interacts with DnaA modulators" evidence="1">
    <location>
        <begin position="1"/>
        <end position="77"/>
    </location>
</feature>
<feature type="region of interest" description="Domain II" evidence="1">
    <location>
        <begin position="77"/>
        <end position="130"/>
    </location>
</feature>
<feature type="region of interest" description="Domain III, AAA+ region" evidence="1">
    <location>
        <begin position="131"/>
        <end position="349"/>
    </location>
</feature>
<feature type="region of interest" description="Domain IV, binds dsDNA" evidence="1">
    <location>
        <begin position="350"/>
        <end position="471"/>
    </location>
</feature>
<feature type="binding site" evidence="1">
    <location>
        <position position="176"/>
    </location>
    <ligand>
        <name>ATP</name>
        <dbReference type="ChEBI" id="CHEBI:30616"/>
    </ligand>
</feature>
<feature type="binding site" evidence="1">
    <location>
        <position position="178"/>
    </location>
    <ligand>
        <name>ATP</name>
        <dbReference type="ChEBI" id="CHEBI:30616"/>
    </ligand>
</feature>
<feature type="binding site" evidence="1">
    <location>
        <position position="179"/>
    </location>
    <ligand>
        <name>ATP</name>
        <dbReference type="ChEBI" id="CHEBI:30616"/>
    </ligand>
</feature>
<feature type="binding site" evidence="1">
    <location>
        <position position="180"/>
    </location>
    <ligand>
        <name>ATP</name>
        <dbReference type="ChEBI" id="CHEBI:30616"/>
    </ligand>
</feature>
<organism>
    <name type="scientific">Bdellovibrio bacteriovorus (strain ATCC 15356 / DSM 50701 / NCIMB 9529 / HD100)</name>
    <dbReference type="NCBI Taxonomy" id="264462"/>
    <lineage>
        <taxon>Bacteria</taxon>
        <taxon>Pseudomonadati</taxon>
        <taxon>Bdellovibrionota</taxon>
        <taxon>Bdellovibrionia</taxon>
        <taxon>Bdellovibrionales</taxon>
        <taxon>Pseudobdellovibrionaceae</taxon>
        <taxon>Bdellovibrio</taxon>
    </lineage>
</organism>
<sequence length="471" mass="53998">MELNSSFWTLIKTKMKSRNDNNKLLDTWLDPIEYVSTTGSADRPRLVLGVPNALHQYFVIENLQDKIYTEISDTYGKPFEVEFSITGNKINSHIETSTTPDEVLSGSEILQAQLARAQNIQPTQPRSSSDTLNSELTFSTFVVGKNSEFAHAACYNVARNPGADDYNPLYIYGPVGMGKTHLLHAAGNHIREQYQHLRITYISAERFMNECISAIRRHEMDKFRQKYRENSDILLVDDVQFIARGEAVQEEFFHTVNSFIDSRKQVILASDRMPKDIHGLEDRSRTRLERGLIADITMPDLETRIAILRYKAEKYNVRLPEDVVNYIARISKRSIRELEGNLKKVKMFSELQGLPIDHELVKRILAHHETQSTISVEEIMKLVADHFKVRVLDLKSSTRAKPIVVPRQIAMYLIKKFLDKSLVDIGKSFGGKDHTTVMNALERVKNLQAADQDIAKDIEDLEQRIHNITRV</sequence>